<name>POLG_DEN28</name>
<comment type="function">
    <molecule>Capsid protein C</molecule>
    <text evidence="5">Plays a role in virus budding by binding to the cell membrane and gathering the viral RNA into a nucleocapsid that forms the core of a mature virus particle. During virus entry, may induce genome penetration into the host cytoplasm after hemifusion induced by the surface proteins. Can migrate to the cell nucleus where it modulates host functions. Overcomes the anti-viral effects of host EXOC1 by sequestering and degrading the latter through the proteasome degradation pathway.</text>
</comment>
<comment type="function">
    <molecule>Capsid protein C</molecule>
    <text evidence="1">Inhibits RNA silencing by interfering with host Dicer.</text>
</comment>
<comment type="function">
    <molecule>Peptide pr</molecule>
    <text evidence="5">Prevents premature fusion activity of envelope proteins in trans-Golgi by binding to envelope protein E at pH6.0. After virion release in extracellular space, gets dissociated from E dimers.</text>
</comment>
<comment type="function">
    <molecule>Protein prM</molecule>
    <text evidence="5">Acts as a chaperone for envelope protein E during intracellular virion assembly by masking and inactivating envelope protein E fusion peptide. prM is the only viral peptide matured by host furin in the trans-Golgi network probably to avoid catastrophic activation of the viral fusion activity in acidic Golgi compartment prior to virion release. prM-E cleavage is inefficient, and many virions are only partially matured. These uncleaved prM would play a role in immune evasion.</text>
</comment>
<comment type="function">
    <molecule>Small envelope protein M</molecule>
    <text evidence="5">May play a role in virus budding. Exerts cytotoxic effects by activating a mitochondrial apoptotic pathway through M ectodomain. May display a viroporin activity.</text>
</comment>
<comment type="function">
    <molecule>Envelope protein E</molecule>
    <text evidence="5">Binds to host cell surface receptor and mediates fusion between viral and cellular membranes. Envelope protein is synthesized in the endoplasmic reticulum in the form of heterodimer with protein prM. They play a role in virion budding in the ER, and the newly formed immature particle is covered with 60 spikes composed of heterodimer between precursor prM and envelope protein E. The virion is transported to the Golgi apparatus where the low pH causes dissociation of PrM-E heterodimers and formation of E homodimers. prM-E cleavage is inefficient, and many virions are only partially matured. These uncleaved prM would play a role in immune evasion.</text>
</comment>
<comment type="function">
    <molecule>Non-structural protein 1</molecule>
    <text evidence="5 6">Involved in immune evasion, pathogenesis and viral replication. Once cleaved off the polyprotein, is targeted to three destinations: the viral replication cycle, the plasma membrane and the extracellular compartment. Essential for viral replication. Required for formation of the replication complex and recruitment of other non-structural proteins to the ER-derived membrane structures. Excreted as a hexameric lipoparticle that plays a role against host immune response. Antagonizing the complement function. Binds to the host macrophages and dendritic cells. Inhibits signal transduction originating from Toll-like receptor 3 (TLR3). Mediates complement activation, which may contribute to the pathogenesis of the vascular leakage that occurs in severe dengue disease. Activates autophagy through the AMPK/ERK/mTOR signaling pathway. Mechanistically, acts as the assembly platform for STK11-AMPK interactions and promotes STK11-AMPK interactions. In turn, promotes phosphorylation of the AMPK kinase structural domain and activates AMPK, thereby positively regulating the AMPK/ERK/mTOR signaling pathway and inducing autophagy.</text>
</comment>
<comment type="function">
    <molecule>Non-structural protein 1</molecule>
    <text evidence="5">Disrupts the host endothelial glycocalyx layer of host pulmonary microvascular endothelial cells, inducing degradation of sialic acid and shedding of heparan sulfate proteoglycans. NS1 induces expression of sialidases, heparanase, and activates cathepsin L, which activates heparanase via enzymatic cleavage. These effects are probably linked to the endothelial hyperpermeability observed in severe dengue disease.</text>
</comment>
<comment type="function">
    <molecule>Non-structural protein 2A</molecule>
    <text evidence="5">Component of the viral RNA replication complex that functions in virion assembly and antagonizes the host immune response.</text>
</comment>
<comment type="function">
    <molecule>Serine protease subunit NS2B</molecule>
    <text evidence="5 15">Required cofactor for the serine protease function of NS3. May have membrane-destabilizing activity and form viroporins (By similarity).</text>
</comment>
<comment type="function">
    <molecule>Serine protease NS3</molecule>
    <text evidence="16">Displays three enzymatic activities: serine protease, NTPase and RNA helicase. NS3 serine protease, in association with NS2B, performs its autocleavage and cleaves the polyprotein at dibasic sites in the cytoplasm: C-prM, NS2A-NS2B, NS2B-NS3, NS3-NS4A, NS4A-2K and NS4B-NS5. NS3 RNA helicase binds RNA and unwinds dsRNA in the 3' to 5' direction.</text>
</comment>
<comment type="function">
    <molecule>Non-structural protein 4A</molecule>
    <text evidence="5 7 10">Regulates the ATPase activity of the NS3 helicase activity. NS4A allows NS3 helicase to conserve energy during unwinding. Plays a role in the inhibition of the host innate immune response. Interacts with host MAVS and thereby prevents the interaction between RIGI and MAVS. In turn, IFN-beta production is impaired. Interacts with host AUP1 which mediates induction of lipophagy in host cells and facilitates production of virus progeny particles (By similarity).</text>
</comment>
<comment type="function">
    <molecule>Peptide 2k</molecule>
    <text evidence="5">Functions as a signal peptide for NS4B and is required for the interferon antagonism activity of the latter.</text>
</comment>
<comment type="function">
    <molecule>Non-structural protein 4B</molecule>
    <text evidence="10">Induces the formation of ER-derived membrane vesicles where the viral replication takes place. Inhibits interferon (IFN)-induced host STAT1 phosphorylation and nuclear translocation, thereby preventing the establishment of cellular antiviral state by blocking the IFN-alpha/beta pathway.</text>
</comment>
<comment type="function">
    <molecule>RNA-directed RNA polymerase NS5</molecule>
    <text evidence="5 6">Replicates the viral (+) and (-) RNA genome, and performs the capping of genomes in the cytoplasm. NS5 methylates viral RNA cap at guanine N-7 and ribose 2'-O positions. Besides its role in RNA genome replication, also prevents the establishment of cellular antiviral state by blocking the interferon-alpha/beta (IFN-alpha/beta) signaling pathway. Inhibits host TYK2 and STAT2 phosphorylation, thereby preventing activation of JAK-STAT signaling pathway (By similarity). May reduce immune responses by preventing the recruitment of the host PAF1 complex to interferon-responsive genes (By similarity).</text>
</comment>
<comment type="catalytic activity">
    <reaction>
        <text>Selective hydrolysis of -Xaa-Xaa-|-Yaa- bonds in which each of the Xaa can be either Arg or Lys and Yaa can be either Ser or Ala.</text>
        <dbReference type="EC" id="3.4.21.91"/>
    </reaction>
</comment>
<comment type="catalytic activity">
    <reaction evidence="13">
        <text>RNA(n) + a ribonucleoside 5'-triphosphate = RNA(n+1) + diphosphate</text>
        <dbReference type="Rhea" id="RHEA:21248"/>
        <dbReference type="Rhea" id="RHEA-COMP:14527"/>
        <dbReference type="Rhea" id="RHEA-COMP:17342"/>
        <dbReference type="ChEBI" id="CHEBI:33019"/>
        <dbReference type="ChEBI" id="CHEBI:61557"/>
        <dbReference type="ChEBI" id="CHEBI:140395"/>
        <dbReference type="EC" id="2.7.7.48"/>
    </reaction>
</comment>
<comment type="catalytic activity">
    <reaction>
        <text>a ribonucleoside 5'-triphosphate + H2O = a ribonucleoside 5'-diphosphate + phosphate + H(+)</text>
        <dbReference type="Rhea" id="RHEA:23680"/>
        <dbReference type="ChEBI" id="CHEBI:15377"/>
        <dbReference type="ChEBI" id="CHEBI:15378"/>
        <dbReference type="ChEBI" id="CHEBI:43474"/>
        <dbReference type="ChEBI" id="CHEBI:57930"/>
        <dbReference type="ChEBI" id="CHEBI:61557"/>
        <dbReference type="EC" id="3.6.1.15"/>
    </reaction>
</comment>
<comment type="catalytic activity">
    <reaction>
        <text>ATP + H2O = ADP + phosphate + H(+)</text>
        <dbReference type="Rhea" id="RHEA:13065"/>
        <dbReference type="ChEBI" id="CHEBI:15377"/>
        <dbReference type="ChEBI" id="CHEBI:15378"/>
        <dbReference type="ChEBI" id="CHEBI:30616"/>
        <dbReference type="ChEBI" id="CHEBI:43474"/>
        <dbReference type="ChEBI" id="CHEBI:456216"/>
        <dbReference type="EC" id="3.6.4.13"/>
    </reaction>
</comment>
<comment type="catalytic activity">
    <reaction evidence="17">
        <text>a 5'-end (5'-triphosphoguanosine)-ribonucleoside in mRNA + S-adenosyl-L-methionine = a 5'-end (N(7)-methyl 5'-triphosphoguanosine)-ribonucleoside in mRNA + S-adenosyl-L-homocysteine</text>
        <dbReference type="Rhea" id="RHEA:67008"/>
        <dbReference type="Rhea" id="RHEA-COMP:17166"/>
        <dbReference type="Rhea" id="RHEA-COMP:17167"/>
        <dbReference type="ChEBI" id="CHEBI:57856"/>
        <dbReference type="ChEBI" id="CHEBI:59789"/>
        <dbReference type="ChEBI" id="CHEBI:156461"/>
        <dbReference type="ChEBI" id="CHEBI:167617"/>
        <dbReference type="EC" id="2.1.1.56"/>
    </reaction>
</comment>
<comment type="catalytic activity">
    <reaction evidence="17">
        <text>a 5'-end (N(7)-methyl 5'-triphosphoguanosine)-ribonucleoside in mRNA + S-adenosyl-L-methionine = a 5'-end (N(7)-methyl 5'-triphosphoguanosine)-(2'-O-methyl-ribonucleoside) in mRNA + S-adenosyl-L-homocysteine + H(+)</text>
        <dbReference type="Rhea" id="RHEA:67020"/>
        <dbReference type="Rhea" id="RHEA-COMP:17167"/>
        <dbReference type="Rhea" id="RHEA-COMP:17168"/>
        <dbReference type="ChEBI" id="CHEBI:15378"/>
        <dbReference type="ChEBI" id="CHEBI:57856"/>
        <dbReference type="ChEBI" id="CHEBI:59789"/>
        <dbReference type="ChEBI" id="CHEBI:156461"/>
        <dbReference type="ChEBI" id="CHEBI:167609"/>
        <dbReference type="EC" id="2.1.1.57"/>
    </reaction>
</comment>
<comment type="subunit">
    <molecule>Capsid protein C</molecule>
    <text evidence="5">Homodimer. Interacts (via N-terminus) with host EXOC1 (via C-terminus); this interaction results in EXOC1 degradation through the proteasome degradation pathway.</text>
</comment>
<comment type="subunit">
    <molecule>Protein prM</molecule>
    <text evidence="5">Forms heterodimers with envelope protein E in the endoplasmic reticulum and Golgi.</text>
</comment>
<comment type="subunit">
    <molecule>Envelope protein E</molecule>
    <text evidence="5">Homodimer; in the endoplasmic reticulum and Golgi. Interacts with protein prM. Interacts with non-structural protein 1.</text>
</comment>
<comment type="subunit">
    <molecule>Non-structural protein 1</molecule>
    <text evidence="5 6">Homodimer; Homohexamer when secreted. Interacts with envelope protein E (By similarity). Interacts with host PRKAA1 (By similarity).</text>
</comment>
<comment type="subunit">
    <molecule>Non-structural protein 2A</molecule>
    <text evidence="5">Interacts (via N-terminus) with serine protease NS3.</text>
</comment>
<comment type="subunit">
    <molecule>Serine protease subunit NS2B</molecule>
    <text evidence="5">Forms a heterodimer with serine protease NS3. May form homooligomers.</text>
</comment>
<comment type="subunit">
    <molecule>Serine protease NS3</molecule>
    <text evidence="5">Forms a heterodimer with NS2B. Interacts with NS4B. Interacts with unphosphorylated RNA-directed RNA polymerase NS5; this interaction stimulates RNA-directed RNA polymerase NS5 guanylyltransferase activity. Interacts with host SHFL.</text>
</comment>
<comment type="subunit">
    <molecule>Non-structural protein 4A</molecule>
    <text evidence="5 6 7">Interacts with host MAVS; this interaction inhibits the synthesis of IFN-beta. Interacts with host SHFL (By similarity). Interacts with host AUP1; the interaction occurs in the presence of Dengue virus NS4B and induces lipophagy which facilitates production of virus progeny particles (By similarity). May interact with host SRPRA and SEC61G (By similarity).</text>
</comment>
<comment type="subunit">
    <molecule>Non-structural protein 4B</molecule>
    <text evidence="5">Interacts with serine protease NS3.</text>
</comment>
<comment type="subunit">
    <molecule>RNA-directed RNA polymerase NS5</molecule>
    <text evidence="5 6">Homodimer. Interacts with host STAT2; this interaction inhibits the phosphorylation of the latter, and, when all viral proteins are present (polyprotein), targets STAT2 for degradation. Interacts with serine protease NS3 (By similarity). Interacts with host PAF1 complex; the interaction may prevent the recruitment of the PAF1 complex to interferon-responsive genes, and thus reduces the immune response (By similarity).</text>
</comment>
<comment type="subcellular location">
    <molecule>Capsid protein C</molecule>
    <subcellularLocation>
        <location evidence="5">Virion</location>
    </subcellularLocation>
    <subcellularLocation>
        <location evidence="5">Host nucleus</location>
    </subcellularLocation>
    <subcellularLocation>
        <location evidence="5">Host cytoplasm</location>
    </subcellularLocation>
    <subcellularLocation>
        <location evidence="5">Host cytoplasm</location>
        <location evidence="5">Host perinuclear region</location>
    </subcellularLocation>
</comment>
<comment type="subcellular location">
    <molecule>Peptide pr</molecule>
    <subcellularLocation>
        <location evidence="5">Secreted</location>
    </subcellularLocation>
</comment>
<comment type="subcellular location">
    <molecule>Small envelope protein M</molecule>
    <subcellularLocation>
        <location evidence="5">Virion membrane</location>
        <topology evidence="11">Multi-pass membrane protein</topology>
    </subcellularLocation>
    <subcellularLocation>
        <location evidence="5">Host endoplasmic reticulum membrane</location>
        <topology evidence="11">Multi-pass membrane protein</topology>
    </subcellularLocation>
</comment>
<comment type="subcellular location">
    <molecule>Envelope protein E</molecule>
    <subcellularLocation>
        <location evidence="5">Virion membrane</location>
        <topology evidence="11">Multi-pass membrane protein</topology>
    </subcellularLocation>
    <subcellularLocation>
        <location evidence="5">Host endoplasmic reticulum membrane</location>
        <topology evidence="11">Multi-pass membrane protein</topology>
    </subcellularLocation>
</comment>
<comment type="subcellular location">
    <molecule>Non-structural protein 1</molecule>
    <subcellularLocation>
        <location evidence="5">Secreted</location>
    </subcellularLocation>
    <subcellularLocation>
        <location evidence="6">Host cytoplasm</location>
    </subcellularLocation>
    <subcellularLocation>
        <location>Host endoplasmic reticulum membrane</location>
        <topology>Peripheral membrane protein</topology>
        <orientation evidence="5">Lumenal side</orientation>
    </subcellularLocation>
    <text evidence="10">Located in RE-derived vesicles hosting the replication complex.</text>
</comment>
<comment type="subcellular location">
    <molecule>Non-structural protein 2A</molecule>
    <subcellularLocation>
        <location evidence="5">Host endoplasmic reticulum membrane</location>
        <topology evidence="5">Multi-pass membrane protein</topology>
    </subcellularLocation>
</comment>
<comment type="subcellular location">
    <molecule>Serine protease subunit NS2B</molecule>
    <subcellularLocation>
        <location>Host endoplasmic reticulum membrane</location>
        <topology evidence="5">Multi-pass membrane protein</topology>
    </subcellularLocation>
</comment>
<comment type="subcellular location">
    <molecule>Serine protease NS3</molecule>
    <subcellularLocation>
        <location evidence="16">Host endoplasmic reticulum membrane</location>
        <topology evidence="16">Peripheral membrane protein</topology>
        <orientation evidence="16">Cytoplasmic side</orientation>
    </subcellularLocation>
    <text evidence="16">Remains non-covalently associated to serine protease subunit NS2B.</text>
</comment>
<comment type="subcellular location">
    <molecule>Non-structural protein 4A</molecule>
    <subcellularLocation>
        <location evidence="5">Host endoplasmic reticulum membrane</location>
        <topology evidence="5">Multi-pass membrane protein</topology>
    </subcellularLocation>
    <subcellularLocation>
        <location evidence="5">Host mitochondrion</location>
    </subcellularLocation>
    <text evidence="5">Located in RE-associated vesicles hosting the replication complex. Interacts with host MAVS in the mitochondrion-associated endoplasmic reticulum membranes.</text>
</comment>
<comment type="subcellular location">
    <molecule>Non-structural protein 4B</molecule>
    <subcellularLocation>
        <location evidence="5">Host endoplasmic reticulum membrane</location>
        <topology evidence="5">Multi-pass membrane protein</topology>
    </subcellularLocation>
    <text evidence="10">Located in RE-derived vesicles hosting the replication complex.</text>
</comment>
<comment type="subcellular location">
    <molecule>RNA-directed RNA polymerase NS5</molecule>
    <subcellularLocation>
        <location>Host endoplasmic reticulum membrane</location>
        <topology>Peripheral membrane protein</topology>
        <orientation>Cytoplasmic side</orientation>
    </subcellularLocation>
    <subcellularLocation>
        <location evidence="5">Host nucleus</location>
    </subcellularLocation>
    <text evidence="5">Located in RE-associated vesicles hosting the replication complex. NS5 protein is mainly localized in the nucleus rather than in ER vesicles, especially in the DENV 2, 3, 4 serotypes.</text>
</comment>
<comment type="domain">
    <text evidence="5">The transmembrane domains of the small envelope protein M and envelope protein E contain an endoplasmic reticulum retention signal.</text>
</comment>
<comment type="PTM">
    <molecule>Genome polyprotein</molecule>
    <text evidence="5">Specific enzymatic cleavages in vivo yield mature proteins. Cleavages in the lumen of endoplasmic reticulum are performed by host signal peptidase, whereas cleavages in the cytoplasmic side are performed by serine protease NS3. Signal cleavage at the 2K-4B site requires a prior NS3 protease-mediated cleavage at the 4A-2K site.</text>
</comment>
<comment type="PTM">
    <molecule>Protein prM</molecule>
    <text evidence="5">Cleaved in post-Golgi vesicles by a host furin, releasing the mature small envelope protein M, and peptide pr. This cleavage is incomplete as up to 30% of viral particles still carry uncleaved prM.</text>
</comment>
<comment type="PTM">
    <molecule>Envelope protein E</molecule>
    <text evidence="5">N-glycosylated.</text>
</comment>
<comment type="PTM">
    <molecule>Non-structural protein 1</molecule>
    <text evidence="5">N-glycosylated. The excreted form is glycosylated and this is required for efficient secretion of the protein from infected cells.</text>
</comment>
<comment type="PTM">
    <molecule>Serine protease NS3</molecule>
    <text evidence="8">Acetylated by host KAT5. Acetylation modulates NS3 RNA-binding and unwinding activities and plays an important positive role for viral replication.</text>
</comment>
<comment type="PTM">
    <molecule>RNA-directed RNA polymerase NS5</molecule>
    <text evidence="5">Phosphorylated on serines residues. This phosphorylation may trigger NS5 nuclear localization.</text>
</comment>
<comment type="PTM">
    <molecule>RNA-directed RNA polymerase NS5</molecule>
    <text evidence="6">Sumoylation of RNA-directed RNA polymerase NS5 increases NS5 protein stability allowing proper viral RNA replication.</text>
</comment>
<comment type="similarity">
    <text evidence="17">In the N-terminal section; belongs to the class I-like SAM-binding methyltransferase superfamily. mRNA cap 0-1 NS5-type methyltransferase family.</text>
</comment>
<evidence type="ECO:0000250" key="1">
    <source>
        <dbReference type="UniProtKB" id="P03314"/>
    </source>
</evidence>
<evidence type="ECO:0000250" key="2">
    <source>
        <dbReference type="UniProtKB" id="P14335"/>
    </source>
</evidence>
<evidence type="ECO:0000250" key="3">
    <source>
        <dbReference type="UniProtKB" id="P14336"/>
    </source>
</evidence>
<evidence type="ECO:0000250" key="4">
    <source>
        <dbReference type="UniProtKB" id="P14340"/>
    </source>
</evidence>
<evidence type="ECO:0000250" key="5">
    <source>
        <dbReference type="UniProtKB" id="P17763"/>
    </source>
</evidence>
<evidence type="ECO:0000250" key="6">
    <source>
        <dbReference type="UniProtKB" id="P29990"/>
    </source>
</evidence>
<evidence type="ECO:0000250" key="7">
    <source>
        <dbReference type="UniProtKB" id="P29991"/>
    </source>
</evidence>
<evidence type="ECO:0000250" key="8">
    <source>
        <dbReference type="UniProtKB" id="Q32ZE1"/>
    </source>
</evidence>
<evidence type="ECO:0000250" key="9">
    <source>
        <dbReference type="UniProtKB" id="Q6YMS4"/>
    </source>
</evidence>
<evidence type="ECO:0000250" key="10">
    <source>
        <dbReference type="UniProtKB" id="Q9Q6P4"/>
    </source>
</evidence>
<evidence type="ECO:0000255" key="11"/>
<evidence type="ECO:0000255" key="12">
    <source>
        <dbReference type="PROSITE-ProRule" id="PRU00498"/>
    </source>
</evidence>
<evidence type="ECO:0000255" key="13">
    <source>
        <dbReference type="PROSITE-ProRule" id="PRU00539"/>
    </source>
</evidence>
<evidence type="ECO:0000255" key="14">
    <source>
        <dbReference type="PROSITE-ProRule" id="PRU00541"/>
    </source>
</evidence>
<evidence type="ECO:0000255" key="15">
    <source>
        <dbReference type="PROSITE-ProRule" id="PRU00859"/>
    </source>
</evidence>
<evidence type="ECO:0000255" key="16">
    <source>
        <dbReference type="PROSITE-ProRule" id="PRU00860"/>
    </source>
</evidence>
<evidence type="ECO:0000255" key="17">
    <source>
        <dbReference type="PROSITE-ProRule" id="PRU00924"/>
    </source>
</evidence>
<evidence type="ECO:0000305" key="18">
    <source>
    </source>
</evidence>
<evidence type="ECO:0007829" key="19">
    <source>
        <dbReference type="PDB" id="2M9P"/>
    </source>
</evidence>
<evidence type="ECO:0007829" key="20">
    <source>
        <dbReference type="PDB" id="2M9Q"/>
    </source>
</evidence>
<reference key="1">
    <citation type="journal article" date="1989" name="Nucleic Acids Res.">
        <title>Nucleotide sequence of the envelope protein gene of a Malaysian dengue-2 virus isolated from a patient with dengue haemorrhagic fever.</title>
        <authorList>
            <person name="Samuel S."/>
            <person name="Koh C.L."/>
            <person name="Blok J."/>
            <person name="Pang T."/>
            <person name="Lam S.K."/>
        </authorList>
    </citation>
    <scope>NUCLEOTIDE SEQUENCE [GENOMIC RNA] OF 281-775</scope>
    <source>
        <strain>Isolate Malaysia M1</strain>
    </source>
</reference>
<reference key="2">
    <citation type="journal article" date="2006" name="J. Gen. Virol.">
        <title>Structure and age of genetic diversity of dengue virus type 2 in Thailand.</title>
        <authorList>
            <person name="Zhang C."/>
            <person name="Mammen M.P. Jr."/>
            <person name="Chinnawirotpisan P."/>
            <person name="Klungthong C."/>
            <person name="Rodpradit P."/>
            <person name="Nisalak A."/>
            <person name="Vaughn D.W."/>
            <person name="Nimmannitya S."/>
            <person name="Kalayanarooj S."/>
            <person name="Holmes E.C."/>
        </authorList>
    </citation>
    <scope>NUCLEOTIDE SEQUENCE [GENOMIC RNA]</scope>
</reference>
<reference key="3">
    <citation type="journal article" date="2003" name="Nat. Struct. Biol.">
        <title>Visualization of membrane protein domains by cryo-electron microscopy of dengue virus.</title>
        <authorList>
            <person name="Zhang W."/>
            <person name="Chipman P.R."/>
            <person name="Corver J."/>
            <person name="Johnson P.R."/>
            <person name="Zhang Y."/>
            <person name="Mukhopadhyay S."/>
            <person name="Baker T.S."/>
            <person name="Strauss J.H."/>
            <person name="Rossmann M.G."/>
            <person name="Kuhn R.J."/>
        </authorList>
    </citation>
    <scope>X-RAY CRYSTALLOGRAPHY (9.5 ANGSTROMS) OF 281-775</scope>
    <scope>TOPOLOGY (ENVELOPE PROTEIN E)</scope>
    <scope>TOPOLOGY (SMALL ENVELOPE PROTEIN M)</scope>
</reference>
<reference key="4">
    <citation type="journal article" date="2008" name="Science">
        <title>The flavivirus precursor membrane-envelope protein complex: structure and maturation.</title>
        <authorList>
            <person name="Li L."/>
            <person name="Lok S.M."/>
            <person name="Yu I.M."/>
            <person name="Zhang Y."/>
            <person name="Kuhn R.J."/>
            <person name="Chen J."/>
            <person name="Rossmann M.G."/>
        </authorList>
    </citation>
    <scope>X-RAY CRYSTALLOGRAPHY (12.5 ANGSTROMS) OF 115-195</scope>
</reference>
<accession>P14337</accession>
<accession>Q20II6</accession>
<dbReference type="EC" id="3.4.21.91"/>
<dbReference type="EC" id="3.6.1.15" evidence="10"/>
<dbReference type="EC" id="3.6.4.13" evidence="10"/>
<dbReference type="EC" id="2.1.1.56" evidence="17"/>
<dbReference type="EC" id="2.1.1.57" evidence="17"/>
<dbReference type="EC" id="2.7.7.48" evidence="13"/>
<dbReference type="EMBL" id="X15434">
    <property type="protein sequence ID" value="CAA33475.1"/>
    <property type="molecule type" value="Genomic_RNA"/>
</dbReference>
<dbReference type="EMBL" id="DQ181805">
    <property type="protein sequence ID" value="ABA61184.1"/>
    <property type="molecule type" value="Genomic_RNA"/>
</dbReference>
<dbReference type="PIR" id="S06747">
    <property type="entry name" value="S06747"/>
</dbReference>
<dbReference type="PDB" id="1P58">
    <property type="method" value="EM"/>
    <property type="resolution" value="9.50 A"/>
    <property type="chains" value="A/B/C=281-775"/>
</dbReference>
<dbReference type="PDB" id="2M9P">
    <property type="method" value="NMR"/>
    <property type="chains" value="A=1391-1654"/>
</dbReference>
<dbReference type="PDB" id="2M9Q">
    <property type="method" value="NMR"/>
    <property type="chains" value="A=1391-1654"/>
</dbReference>
<dbReference type="PDB" id="3C6D">
    <property type="method" value="EM"/>
    <property type="resolution" value="12.50 A"/>
    <property type="chains" value="D/E/F=115-195"/>
</dbReference>
<dbReference type="PDBsum" id="1P58"/>
<dbReference type="PDBsum" id="2M9P"/>
<dbReference type="PDBsum" id="2M9Q"/>
<dbReference type="PDBsum" id="3C6D"/>
<dbReference type="BMRB" id="P14337"/>
<dbReference type="SMR" id="P14337"/>
<dbReference type="MEROPS" id="S07.001"/>
<dbReference type="ABCD" id="P14337">
    <property type="antibodies" value="1 sequenced antibody"/>
</dbReference>
<dbReference type="EvolutionaryTrace" id="P14337"/>
<dbReference type="PRO" id="PR:P14337"/>
<dbReference type="Proteomes" id="UP000007195">
    <property type="component" value="Genome"/>
</dbReference>
<dbReference type="GO" id="GO:0005576">
    <property type="term" value="C:extracellular region"/>
    <property type="evidence" value="ECO:0007669"/>
    <property type="project" value="UniProtKB-SubCell"/>
</dbReference>
<dbReference type="GO" id="GO:0044167">
    <property type="term" value="C:host cell endoplasmic reticulum membrane"/>
    <property type="evidence" value="ECO:0007669"/>
    <property type="project" value="UniProtKB-SubCell"/>
</dbReference>
<dbReference type="GO" id="GO:0033650">
    <property type="term" value="C:host cell mitochondrion"/>
    <property type="evidence" value="ECO:0007669"/>
    <property type="project" value="UniProtKB-SubCell"/>
</dbReference>
<dbReference type="GO" id="GO:0042025">
    <property type="term" value="C:host cell nucleus"/>
    <property type="evidence" value="ECO:0007669"/>
    <property type="project" value="UniProtKB-SubCell"/>
</dbReference>
<dbReference type="GO" id="GO:0044220">
    <property type="term" value="C:host cell perinuclear region of cytoplasm"/>
    <property type="evidence" value="ECO:0007669"/>
    <property type="project" value="UniProtKB-SubCell"/>
</dbReference>
<dbReference type="GO" id="GO:0016020">
    <property type="term" value="C:membrane"/>
    <property type="evidence" value="ECO:0007669"/>
    <property type="project" value="UniProtKB-KW"/>
</dbReference>
<dbReference type="GO" id="GO:0019028">
    <property type="term" value="C:viral capsid"/>
    <property type="evidence" value="ECO:0007669"/>
    <property type="project" value="UniProtKB-KW"/>
</dbReference>
<dbReference type="GO" id="GO:0019031">
    <property type="term" value="C:viral envelope"/>
    <property type="evidence" value="ECO:0007669"/>
    <property type="project" value="UniProtKB-KW"/>
</dbReference>
<dbReference type="GO" id="GO:0055036">
    <property type="term" value="C:virion membrane"/>
    <property type="evidence" value="ECO:0007669"/>
    <property type="project" value="UniProtKB-SubCell"/>
</dbReference>
<dbReference type="GO" id="GO:0005524">
    <property type="term" value="F:ATP binding"/>
    <property type="evidence" value="ECO:0007669"/>
    <property type="project" value="UniProtKB-KW"/>
</dbReference>
<dbReference type="GO" id="GO:0016887">
    <property type="term" value="F:ATP hydrolysis activity"/>
    <property type="evidence" value="ECO:0007669"/>
    <property type="project" value="RHEA"/>
</dbReference>
<dbReference type="GO" id="GO:0015267">
    <property type="term" value="F:channel activity"/>
    <property type="evidence" value="ECO:0007669"/>
    <property type="project" value="UniProtKB-KW"/>
</dbReference>
<dbReference type="GO" id="GO:0003725">
    <property type="term" value="F:double-stranded RNA binding"/>
    <property type="evidence" value="ECO:0007669"/>
    <property type="project" value="InterPro"/>
</dbReference>
<dbReference type="GO" id="GO:0046872">
    <property type="term" value="F:metal ion binding"/>
    <property type="evidence" value="ECO:0007669"/>
    <property type="project" value="UniProtKB-KW"/>
</dbReference>
<dbReference type="GO" id="GO:0004483">
    <property type="term" value="F:mRNA (nucleoside-2'-O-)-methyltransferase activity"/>
    <property type="evidence" value="ECO:0007669"/>
    <property type="project" value="UniProtKB-EC"/>
</dbReference>
<dbReference type="GO" id="GO:0004482">
    <property type="term" value="F:mRNA 5'-cap (guanine-N7-)-methyltransferase activity"/>
    <property type="evidence" value="ECO:0007669"/>
    <property type="project" value="UniProtKB-EC"/>
</dbReference>
<dbReference type="GO" id="GO:0046983">
    <property type="term" value="F:protein dimerization activity"/>
    <property type="evidence" value="ECO:0007669"/>
    <property type="project" value="InterPro"/>
</dbReference>
<dbReference type="GO" id="GO:0003724">
    <property type="term" value="F:RNA helicase activity"/>
    <property type="evidence" value="ECO:0007669"/>
    <property type="project" value="UniProtKB-EC"/>
</dbReference>
<dbReference type="GO" id="GO:0003968">
    <property type="term" value="F:RNA-directed RNA polymerase activity"/>
    <property type="evidence" value="ECO:0007669"/>
    <property type="project" value="UniProtKB-KW"/>
</dbReference>
<dbReference type="GO" id="GO:0004252">
    <property type="term" value="F:serine-type endopeptidase activity"/>
    <property type="evidence" value="ECO:0007669"/>
    <property type="project" value="InterPro"/>
</dbReference>
<dbReference type="GO" id="GO:0005198">
    <property type="term" value="F:structural molecule activity"/>
    <property type="evidence" value="ECO:0007669"/>
    <property type="project" value="InterPro"/>
</dbReference>
<dbReference type="GO" id="GO:0075512">
    <property type="term" value="P:clathrin-dependent endocytosis of virus by host cell"/>
    <property type="evidence" value="ECO:0007669"/>
    <property type="project" value="UniProtKB-KW"/>
</dbReference>
<dbReference type="GO" id="GO:0039654">
    <property type="term" value="P:fusion of virus membrane with host endosome membrane"/>
    <property type="evidence" value="ECO:0007669"/>
    <property type="project" value="UniProtKB-KW"/>
</dbReference>
<dbReference type="GO" id="GO:0034220">
    <property type="term" value="P:monoatomic ion transmembrane transport"/>
    <property type="evidence" value="ECO:0007669"/>
    <property type="project" value="UniProtKB-KW"/>
</dbReference>
<dbReference type="GO" id="GO:0006508">
    <property type="term" value="P:proteolysis"/>
    <property type="evidence" value="ECO:0007669"/>
    <property type="project" value="UniProtKB-KW"/>
</dbReference>
<dbReference type="GO" id="GO:0039520">
    <property type="term" value="P:symbiont-mediated activation of host autophagy"/>
    <property type="evidence" value="ECO:0007669"/>
    <property type="project" value="UniProtKB-KW"/>
</dbReference>
<dbReference type="GO" id="GO:0039545">
    <property type="term" value="P:symbiont-mediated suppression of host cytoplasmic pattern recognition receptor signaling pathway via inhibition of MAVS activity"/>
    <property type="evidence" value="ECO:0007669"/>
    <property type="project" value="UniProtKB-KW"/>
</dbReference>
<dbReference type="GO" id="GO:0039574">
    <property type="term" value="P:symbiont-mediated suppression of host JAK-STAT cascade via inhibition of host TYK2 activity"/>
    <property type="evidence" value="ECO:0007669"/>
    <property type="project" value="UniProtKB-KW"/>
</dbReference>
<dbReference type="GO" id="GO:0039564">
    <property type="term" value="P:symbiont-mediated suppression of host JAK-STAT cascade via inhibition of STAT2 activity"/>
    <property type="evidence" value="ECO:0007669"/>
    <property type="project" value="UniProtKB-KW"/>
</dbReference>
<dbReference type="GO" id="GO:0039502">
    <property type="term" value="P:symbiont-mediated suppression of host type I interferon-mediated signaling pathway"/>
    <property type="evidence" value="ECO:0007669"/>
    <property type="project" value="UniProtKB-KW"/>
</dbReference>
<dbReference type="GO" id="GO:0039694">
    <property type="term" value="P:viral RNA genome replication"/>
    <property type="evidence" value="ECO:0007669"/>
    <property type="project" value="InterPro"/>
</dbReference>
<dbReference type="GO" id="GO:0019062">
    <property type="term" value="P:virion attachment to host cell"/>
    <property type="evidence" value="ECO:0007669"/>
    <property type="project" value="UniProtKB-KW"/>
</dbReference>
<dbReference type="CDD" id="cd20761">
    <property type="entry name" value="capping_2-OMTase_Flaviviridae"/>
    <property type="match status" value="1"/>
</dbReference>
<dbReference type="CDD" id="cd17931">
    <property type="entry name" value="DEXHc_viral_Ns3"/>
    <property type="match status" value="1"/>
</dbReference>
<dbReference type="CDD" id="cd12149">
    <property type="entry name" value="Flavi_E_C"/>
    <property type="match status" value="1"/>
</dbReference>
<dbReference type="CDD" id="cd17038">
    <property type="entry name" value="Flavi_M"/>
    <property type="match status" value="1"/>
</dbReference>
<dbReference type="CDD" id="cd23204">
    <property type="entry name" value="Flavivirus_RdRp"/>
    <property type="match status" value="1"/>
</dbReference>
<dbReference type="CDD" id="cd18806">
    <property type="entry name" value="SF2_C_viral"/>
    <property type="match status" value="1"/>
</dbReference>
<dbReference type="FunFam" id="1.20.1280.260:FF:000001">
    <property type="entry name" value="Envelope glycoprotein"/>
    <property type="match status" value="1"/>
</dbReference>
<dbReference type="FunFam" id="2.60.40.350:FF:000001">
    <property type="entry name" value="Envelope glycoprotein"/>
    <property type="match status" value="1"/>
</dbReference>
<dbReference type="FunFam" id="1.10.10.930:FF:000001">
    <property type="entry name" value="Genome polyprotein"/>
    <property type="match status" value="1"/>
</dbReference>
<dbReference type="FunFam" id="1.10.260.90:FF:000001">
    <property type="entry name" value="Genome polyprotein"/>
    <property type="match status" value="1"/>
</dbReference>
<dbReference type="FunFam" id="2.60.260.50:FF:000001">
    <property type="entry name" value="Genome polyprotein"/>
    <property type="match status" value="1"/>
</dbReference>
<dbReference type="FunFam" id="3.30.70.2840:FF:000001">
    <property type="entry name" value="Genome polyprotein"/>
    <property type="match status" value="1"/>
</dbReference>
<dbReference type="FunFam" id="3.30.70.2840:FF:000002">
    <property type="entry name" value="Genome polyprotein"/>
    <property type="match status" value="1"/>
</dbReference>
<dbReference type="FunFam" id="3.40.50.150:FF:000105">
    <property type="entry name" value="Genome polyprotein"/>
    <property type="match status" value="1"/>
</dbReference>
<dbReference type="FunFam" id="3.40.50.300:FF:000763">
    <property type="entry name" value="Genome polyprotein"/>
    <property type="match status" value="1"/>
</dbReference>
<dbReference type="Gene3D" id="1.10.10.930">
    <property type="match status" value="1"/>
</dbReference>
<dbReference type="Gene3D" id="1.10.260.90">
    <property type="match status" value="1"/>
</dbReference>
<dbReference type="Gene3D" id="1.20.1280.260">
    <property type="match status" value="1"/>
</dbReference>
<dbReference type="Gene3D" id="2.40.10.120">
    <property type="match status" value="2"/>
</dbReference>
<dbReference type="Gene3D" id="2.60.40.350">
    <property type="match status" value="1"/>
</dbReference>
<dbReference type="Gene3D" id="1.10.8.970">
    <property type="entry name" value="Flavivirus envelope glycoprotein M-like"/>
    <property type="match status" value="1"/>
</dbReference>
<dbReference type="Gene3D" id="2.60.260.50">
    <property type="entry name" value="Flavivirus polyprotein propeptide domain"/>
    <property type="match status" value="1"/>
</dbReference>
<dbReference type="Gene3D" id="3.30.70.2840">
    <property type="entry name" value="Flavivirus RNA-directed RNA polymerase, thumb domain"/>
    <property type="match status" value="3"/>
</dbReference>
<dbReference type="Gene3D" id="3.40.50.300">
    <property type="entry name" value="P-loop containing nucleotide triphosphate hydrolases"/>
    <property type="match status" value="2"/>
</dbReference>
<dbReference type="Gene3D" id="2.60.98.10">
    <property type="entry name" value="Tick-borne Encephalitis virus Glycoprotein, domain 1"/>
    <property type="match status" value="1"/>
</dbReference>
<dbReference type="Gene3D" id="2.40.10.10">
    <property type="entry name" value="Trypsin-like serine proteases"/>
    <property type="match status" value="1"/>
</dbReference>
<dbReference type="Gene3D" id="3.40.50.150">
    <property type="entry name" value="Vaccinia Virus protein VP39"/>
    <property type="match status" value="1"/>
</dbReference>
<dbReference type="Gene3D" id="3.30.67.10">
    <property type="entry name" value="Viral Envelope Glycoprotein, domain 2"/>
    <property type="match status" value="1"/>
</dbReference>
<dbReference type="Gene3D" id="3.30.387.10">
    <property type="entry name" value="Viral Envelope Glycoprotein, domain 3"/>
    <property type="match status" value="1"/>
</dbReference>
<dbReference type="InterPro" id="IPR043502">
    <property type="entry name" value="DNA/RNA_pol_sf"/>
</dbReference>
<dbReference type="InterPro" id="IPR000069">
    <property type="entry name" value="Env_glycoprot_M_flavivir"/>
</dbReference>
<dbReference type="InterPro" id="IPR038302">
    <property type="entry name" value="Env_glycoprot_M_sf_flavivir"/>
</dbReference>
<dbReference type="InterPro" id="IPR013755">
    <property type="entry name" value="Flav_gly_cen_dom_subdom1"/>
</dbReference>
<dbReference type="InterPro" id="IPR001122">
    <property type="entry name" value="Flavi_capsidC"/>
</dbReference>
<dbReference type="InterPro" id="IPR037172">
    <property type="entry name" value="Flavi_capsidC_sf"/>
</dbReference>
<dbReference type="InterPro" id="IPR011492">
    <property type="entry name" value="Flavi_DEAD"/>
</dbReference>
<dbReference type="InterPro" id="IPR027287">
    <property type="entry name" value="Flavi_E_Ig-like"/>
</dbReference>
<dbReference type="InterPro" id="IPR026470">
    <property type="entry name" value="Flavi_E_Stem/Anchor_dom"/>
</dbReference>
<dbReference type="InterPro" id="IPR038345">
    <property type="entry name" value="Flavi_E_Stem/Anchor_dom_sf"/>
</dbReference>
<dbReference type="InterPro" id="IPR011998">
    <property type="entry name" value="Flavi_Glycoprot_E_cen/dimer"/>
</dbReference>
<dbReference type="InterPro" id="IPR001157">
    <property type="entry name" value="Flavi_NS1"/>
</dbReference>
<dbReference type="InterPro" id="IPR000752">
    <property type="entry name" value="Flavi_NS2A"/>
</dbReference>
<dbReference type="InterPro" id="IPR000487">
    <property type="entry name" value="Flavi_NS2B"/>
</dbReference>
<dbReference type="InterPro" id="IPR001850">
    <property type="entry name" value="Flavi_NS3_S7"/>
</dbReference>
<dbReference type="InterPro" id="IPR000404">
    <property type="entry name" value="Flavi_NS4A"/>
</dbReference>
<dbReference type="InterPro" id="IPR001528">
    <property type="entry name" value="Flavi_NS4B"/>
</dbReference>
<dbReference type="InterPro" id="IPR046811">
    <property type="entry name" value="Flavi_NS5_thumb"/>
</dbReference>
<dbReference type="InterPro" id="IPR002535">
    <property type="entry name" value="Flavi_propep"/>
</dbReference>
<dbReference type="InterPro" id="IPR038688">
    <property type="entry name" value="Flavi_propep_sf"/>
</dbReference>
<dbReference type="InterPro" id="IPR047530">
    <property type="entry name" value="Flavi_RdRp"/>
</dbReference>
<dbReference type="InterPro" id="IPR000208">
    <property type="entry name" value="Flavi_RdRp_fingers/palm"/>
</dbReference>
<dbReference type="InterPro" id="IPR000336">
    <property type="entry name" value="Flavivir/Alphavir_Ig-like_sf"/>
</dbReference>
<dbReference type="InterPro" id="IPR014412">
    <property type="entry name" value="Gen_Poly_FLV"/>
</dbReference>
<dbReference type="InterPro" id="IPR036253">
    <property type="entry name" value="Glycoprot_cen/dimer_sf"/>
</dbReference>
<dbReference type="InterPro" id="IPR038055">
    <property type="entry name" value="Glycoprot_E_dimer_dom"/>
</dbReference>
<dbReference type="InterPro" id="IPR013756">
    <property type="entry name" value="GlyE_cen_dom_subdom2"/>
</dbReference>
<dbReference type="InterPro" id="IPR014001">
    <property type="entry name" value="Helicase_ATP-bd"/>
</dbReference>
<dbReference type="InterPro" id="IPR001650">
    <property type="entry name" value="Helicase_C-like"/>
</dbReference>
<dbReference type="InterPro" id="IPR014756">
    <property type="entry name" value="Ig_E-set"/>
</dbReference>
<dbReference type="InterPro" id="IPR026490">
    <property type="entry name" value="mRNA_cap_0/1_MeTrfase"/>
</dbReference>
<dbReference type="InterPro" id="IPR049486">
    <property type="entry name" value="NS3-hel_C_flaviviridae"/>
</dbReference>
<dbReference type="InterPro" id="IPR027417">
    <property type="entry name" value="P-loop_NTPase"/>
</dbReference>
<dbReference type="InterPro" id="IPR009003">
    <property type="entry name" value="Peptidase_S1_PA"/>
</dbReference>
<dbReference type="InterPro" id="IPR043504">
    <property type="entry name" value="Peptidase_S1_PA_chymotrypsin"/>
</dbReference>
<dbReference type="InterPro" id="IPR007094">
    <property type="entry name" value="RNA-dir_pol_PSvirus"/>
</dbReference>
<dbReference type="InterPro" id="IPR002877">
    <property type="entry name" value="RNA_MeTrfase_FtsJ_dom"/>
</dbReference>
<dbReference type="InterPro" id="IPR029063">
    <property type="entry name" value="SAM-dependent_MTases_sf"/>
</dbReference>
<dbReference type="NCBIfam" id="TIGR04240">
    <property type="entry name" value="flavi_E_stem"/>
    <property type="match status" value="1"/>
</dbReference>
<dbReference type="Pfam" id="PF20907">
    <property type="entry name" value="Flav_NS3-hel_C"/>
    <property type="match status" value="1"/>
</dbReference>
<dbReference type="Pfam" id="PF01003">
    <property type="entry name" value="Flavi_capsid"/>
    <property type="match status" value="1"/>
</dbReference>
<dbReference type="Pfam" id="PF07652">
    <property type="entry name" value="Flavi_DEAD"/>
    <property type="match status" value="1"/>
</dbReference>
<dbReference type="Pfam" id="PF21659">
    <property type="entry name" value="Flavi_E_stem"/>
    <property type="match status" value="1"/>
</dbReference>
<dbReference type="Pfam" id="PF02832">
    <property type="entry name" value="Flavi_glycop_C"/>
    <property type="match status" value="1"/>
</dbReference>
<dbReference type="Pfam" id="PF00869">
    <property type="entry name" value="Flavi_glycoprot"/>
    <property type="match status" value="1"/>
</dbReference>
<dbReference type="Pfam" id="PF01004">
    <property type="entry name" value="Flavi_M"/>
    <property type="match status" value="1"/>
</dbReference>
<dbReference type="Pfam" id="PF00948">
    <property type="entry name" value="Flavi_NS1"/>
    <property type="match status" value="1"/>
</dbReference>
<dbReference type="Pfam" id="PF01005">
    <property type="entry name" value="Flavi_NS2A"/>
    <property type="match status" value="1"/>
</dbReference>
<dbReference type="Pfam" id="PF01002">
    <property type="entry name" value="Flavi_NS2B"/>
    <property type="match status" value="1"/>
</dbReference>
<dbReference type="Pfam" id="PF01350">
    <property type="entry name" value="Flavi_NS4A"/>
    <property type="match status" value="1"/>
</dbReference>
<dbReference type="Pfam" id="PF01349">
    <property type="entry name" value="Flavi_NS4B"/>
    <property type="match status" value="1"/>
</dbReference>
<dbReference type="Pfam" id="PF00972">
    <property type="entry name" value="Flavi_NS5"/>
    <property type="match status" value="1"/>
</dbReference>
<dbReference type="Pfam" id="PF20483">
    <property type="entry name" value="Flavi_NS5_thumb"/>
    <property type="match status" value="1"/>
</dbReference>
<dbReference type="Pfam" id="PF01570">
    <property type="entry name" value="Flavi_propep"/>
    <property type="match status" value="1"/>
</dbReference>
<dbReference type="Pfam" id="PF01728">
    <property type="entry name" value="FtsJ"/>
    <property type="match status" value="1"/>
</dbReference>
<dbReference type="Pfam" id="PF00949">
    <property type="entry name" value="Peptidase_S7"/>
    <property type="match status" value="1"/>
</dbReference>
<dbReference type="PIRSF" id="PIRSF003817">
    <property type="entry name" value="Gen_Poly_FLV"/>
    <property type="match status" value="1"/>
</dbReference>
<dbReference type="SMART" id="SM00487">
    <property type="entry name" value="DEXDc"/>
    <property type="match status" value="1"/>
</dbReference>
<dbReference type="SMART" id="SM00490">
    <property type="entry name" value="HELICc"/>
    <property type="match status" value="1"/>
</dbReference>
<dbReference type="SUPFAM" id="SSF56672">
    <property type="entry name" value="DNA/RNA polymerases"/>
    <property type="match status" value="1"/>
</dbReference>
<dbReference type="SUPFAM" id="SSF81296">
    <property type="entry name" value="E set domains"/>
    <property type="match status" value="1"/>
</dbReference>
<dbReference type="SUPFAM" id="SSF101257">
    <property type="entry name" value="Flavivirus capsid protein C"/>
    <property type="match status" value="1"/>
</dbReference>
<dbReference type="SUPFAM" id="SSF52540">
    <property type="entry name" value="P-loop containing nucleoside triphosphate hydrolases"/>
    <property type="match status" value="2"/>
</dbReference>
<dbReference type="SUPFAM" id="SSF53335">
    <property type="entry name" value="S-adenosyl-L-methionine-dependent methyltransferases"/>
    <property type="match status" value="1"/>
</dbReference>
<dbReference type="SUPFAM" id="SSF50494">
    <property type="entry name" value="Trypsin-like serine proteases"/>
    <property type="match status" value="1"/>
</dbReference>
<dbReference type="SUPFAM" id="SSF56983">
    <property type="entry name" value="Viral glycoprotein, central and dimerisation domains"/>
    <property type="match status" value="1"/>
</dbReference>
<dbReference type="PROSITE" id="PS51527">
    <property type="entry name" value="FLAVIVIRUS_NS2B"/>
    <property type="match status" value="1"/>
</dbReference>
<dbReference type="PROSITE" id="PS51528">
    <property type="entry name" value="FLAVIVIRUS_NS3PRO"/>
    <property type="match status" value="1"/>
</dbReference>
<dbReference type="PROSITE" id="PS51192">
    <property type="entry name" value="HELICASE_ATP_BIND_1"/>
    <property type="match status" value="1"/>
</dbReference>
<dbReference type="PROSITE" id="PS51194">
    <property type="entry name" value="HELICASE_CTER"/>
    <property type="match status" value="1"/>
</dbReference>
<dbReference type="PROSITE" id="PS50507">
    <property type="entry name" value="RDRP_SSRNA_POS"/>
    <property type="match status" value="1"/>
</dbReference>
<dbReference type="PROSITE" id="PS51591">
    <property type="entry name" value="RNA_CAP01_NS5_MT"/>
    <property type="match status" value="1"/>
</dbReference>
<sequence>MNNQRKKAKNTPFNMLKRERNRVSTVQQLTKRFSLGMLQGRGPLKLFMALVAFLRFLTIPPTAGILKRWGTIKKSKAINVLRGFRKEIGRMLNILNRRRRSAGMIIMLIPTVMAFHLTTRNGEPHMIVSRQEKGKSLLFKTEDGVNMCTLMAMDLGELCEDTITYKCPLLRQNEPEDIDCWCNSTSTWVTYGTCTTTGEHRREKRSVALVPHVGMGLETRTETWMSSEGAWKHAQRIETWILRHPGFTIMAAILAYTIGTTHFQRALIFILLTAVAPSMTMRCIGISNRDFVEGVSGGSWVDIVLEHGSCVTTMAKNKPTLDFELIKTEAKQPATLRKYCIEAKLTNTTTESRCPTQGEPSLNEEQDKRFVCKHSMVDRGWGNGCGLFGKGGIVTCAMFTCKKNMEGKIVQPENLEYTIVVTPHSGEEHAVGNDTGKHGKEIKVTPQSSITEAELTGYGTVTMECSPRTGLDFNEMVLLQMENKAWLVHRQWFLDLPLPWLPGADTQGSNWIQKETLVTFKNPHAKKQDVVVLGSQEGAMHTALTGATEIQMSSGNLLFTGHLKCRLRMDKLQLKGMSYSMCTGKFKVVKEIAETQHGTIVIRVQYEGDGSPCKIPFEIMDLEKRHVLGRLITVNPIVTEKDSPVNIEAEPPFGDSYIIIGVEPGQLKLNWFKKGSSIGQMFETTMRGAKRMAILGDTAWDFGSLGGVFTSIGKALHQVFGAIYGAAFSGVSWTMKILIGVIITWIGMNSRSTSLSVSLVLVGIVTLYLGVMVQADSGCVVSWKNKELKCGSGIFITDNVHTWTEQYKFQPESPSKLASAIQKAQEEGICGIRSVTRLENLMWKQITPELNHILAENEVKLTIMTGDIKGIMQAGKRSLRPQPTELKYSWKTWGKAKMLSTESHNQTFLIDGPETAECPNTNRAWNSLEVEDYGFGVFTTNIWLKLKEKQDAFCDSKLMSAAIKDNRAVHADMGYWIESALNDTWKIEKASFIEVKNCHWPKSHTLWSNGVLESEMIIPKNLAGPVSQHNYRPGYHTQIAGPWHLGKLEMDFDFCDGTTVVVTEDCGNRGPSLRTTTASGKLITEWCCRSCTLPPLRYRGEDGCWYGMEIRPLKEKEENLVNSLVTAGHGQVDNFSLGVLGMALFLEEMLRTRVGTKHAILLVAVSFVTLITGNMSFKDLGRVVVMVGATMTDDIGMGVTYLALLAAFKVRPTFAAGLLLRKLTSKELMMTTIGIVLLSQSTIPETILELTDALALGMMVLKMVRNMEKYQLAVTIMAILCVPNAVILQNAWKVSCTILAVVSVSPLLLTSSQQKTDWIPLALTIKGLNPTAIFLTTLSRTSKKRSWPLNEAIMAVGMVSILASSLLKNDIPMTGPLVAGGLLTVCYVLTGRSADLELERAADVKWEDQAEISGSSPILSITISEDGSMSIKNEEEEQTLTILIRTGLLVISGLFPVSIPITAAAWYLWEVKKQRAGVLWDVPSPPPMGKAELEDGAYRIKQKGILGYSQIGAGVYKEGTFHTMWHVTRGAVLMHKGKRIEPSWADVKKDLISYGGGWKLEGEWKEGEEVQVLALEPGKNPRAVQTKPGLFKTNAGTIGAVSLDFSPGTSGSPIIDKKGKVVGLYGNGVVTRSGAYVSAIAQTEKSIEDNPEIEDDIFRKRRLTIMDLHPGAGKTKRYLPAIVREAIKRGLRTLILAPTRVVAAEMEEALRGLPIRYQTPAIRAEHTGREIVDLMCHATFTMRLLSPVRVPNYNLIIMDEAHFTDPASIAARGYISTRVEMGEAAGIFMTATPPGSRDPFPQSNAPIIDEEREIPERSWNSGHEWVTDFKGKTVWFVPSIKAGNDIAACLRKNGKKVIQLSRKTFDSEYVKTRTNDWDFVVTTDISEMGANFKAERVIDPRRCMKPVILTDGEERVILAGPMPVTHSSAAQRRGRIGRNPKNENDQYIYMGEPLENDEDCAHWKEAKMLLDNINTPEGIIPSMFEPEREKVDAIDGEYRLRGEARKTFVDLMRRGDLPVWLAYKVAAEGINYADRRWCFDGIKNNQILEENVEVEIWTKEGERKKLKPRWLDARIYSDPLALKEFKEFAAGRKSLTLNLITEMGRLPTFMTQKTRDALDNLAVLHTAEAGGRAYNHALSELPETLETLLLLTLLATVTGGIFLFLMSGRGIGKMTLGMCCIITASVLLWYAQIQPHWIAASIILEFFLIVLLIPEPEKQRTPQDNQLTYVVIAILTVVAATMANEMGFLEKTKKDLGLGSIATQQPESNILDIDLRPASAWTLYAVATTFVTPMLRHSIENSSVNVSLTAIANQATVLMGLGKGWPLSKMDIGVPLLAIGCYSQVNPITLTAALLLLVAHYAIIGPGLQAKATREAQKRAAAGIMKNPTVDGITVIDLDPIPYDPKFEKQLGQVMLLVLCVTQVLMMRTTWALCEALTLATGPISTLWEGNPGRFWNTTIAVSMANIFRGSYLAGAGLLFSIMKNTTNTRRGTGNIGETLGEKWKSRLNALGKSEFQIYKKSGIQEVDRTLAKEGIKRGETDHHAVSRGSAKLRWFVERNMVTPEGKVVDLGCGRGGWSYYCGGLKNVREVKGLTKGGPGHEEPIPMSTYGWNLVRLQSGVDVFFIPPEKCDTLLCDIGESSPSPTVEAGRTLRVLNLVENWLNNNTQFCIKVLNPYMPSVIEKMETLQRKYGGALVRNPLSRNSTHEMYWVSNASGNIVSSVNMISRMLINRFTMRHKKATYEPDVDLGSGTRNIGIESEIPNLDIIGKRIEKIKQEHETSWHYDQDHPYKTWAYHGSYETKQTGSASSMVNGVVRLLTKPWDVLPTVTQMAMTDTTPFGQQRVFKEKVDTRTQEPKEGTKKLMKITAEWLWKELGKKKTPRMCTREEFTRKVRSNAALGAIFTDENKWKSAREAVEDSRFWELVDKERNLHLEGKCETCVYNMMGKREKKLGEFGKAKGSRAIWYMWLGARFLEFEALGFLNEDHWFSRENSLSGVEGEGLHKLGYILRDVSKKEGGAMYADDTAGWDTRITLEDLKNEEMVTNHMEGEHKKLAEAIFKLTYQNKVVRVQRPTPRGTVMDIISRRDQRGSGQVGTYGLNTFTNMEAQLIRQMEGEGVFKNIQHLTVTEEIAVQNWLARVGRERLSRMAISGDDCVVKPLDDRFASALTALNDMGKIRKDIQQWEPSRGWNDWTQVPFCSHHFHELIMKDGRVLVVPCRNQDELIGRARISQGAGWSLRETACLGKSYAQMWSLMYFHRRDLRLAANAICSAVPSHWVPTSRTTWSIHAKHEWMTTEDMLTVWNRVWIQENPWMEDKTPVESWEEIPYLGKREDQWCGSLIGLTSRATWAKNIQAAINQVRSLIGNEEYTDYMPSMKRFRREEEEAGVLW</sequence>
<organismHost>
    <name type="scientific">Aedimorphus</name>
    <dbReference type="NCBI Taxonomy" id="53540"/>
</organismHost>
<organismHost>
    <name type="scientific">Diceromyia</name>
    <dbReference type="NCBI Taxonomy" id="53539"/>
</organismHost>
<organismHost>
    <name type="scientific">Erythrocebus patas</name>
    <name type="common">Red guenon</name>
    <name type="synonym">Cercopithecus patas</name>
    <dbReference type="NCBI Taxonomy" id="9538"/>
</organismHost>
<organismHost>
    <name type="scientific">Homo sapiens</name>
    <name type="common">Human</name>
    <dbReference type="NCBI Taxonomy" id="9606"/>
</organismHost>
<organismHost>
    <name type="scientific">Stegomyia</name>
    <dbReference type="NCBI Taxonomy" id="53541"/>
</organismHost>
<feature type="chain" id="PRO_0000405210" description="Genome polyprotein">
    <location>
        <begin position="1"/>
        <end position="3391"/>
    </location>
</feature>
<feature type="chain" id="PRO_0000267992" description="Capsid protein C" evidence="6">
    <location>
        <begin position="1"/>
        <end position="100"/>
    </location>
</feature>
<feature type="propeptide" id="PRO_0000267993" description="ER anchor for the capsid protein C, removed in mature form by serine protease NS3" evidence="6">
    <location>
        <begin position="101"/>
        <end position="114"/>
    </location>
</feature>
<feature type="chain" id="PRO_0000267994" description="Protein prM" evidence="6">
    <location>
        <begin position="115"/>
        <end position="280"/>
    </location>
</feature>
<feature type="chain" id="PRO_0000267995" description="Peptide pr" evidence="6">
    <location>
        <begin position="115"/>
        <end position="205"/>
    </location>
</feature>
<feature type="chain" id="PRO_0000267996" description="Small envelope protein M" evidence="6">
    <location>
        <begin position="206"/>
        <end position="280"/>
    </location>
</feature>
<feature type="chain" id="PRO_0000037914" description="Envelope protein E" evidence="6">
    <location>
        <begin position="281"/>
        <end position="775"/>
    </location>
</feature>
<feature type="chain" id="PRO_0000267997" description="Non-structural protein 1" evidence="6">
    <location>
        <begin position="776"/>
        <end position="1127"/>
    </location>
</feature>
<feature type="chain" id="PRO_0000267999" description="Non-structural protein 2A" evidence="6">
    <location>
        <begin position="1128"/>
        <end position="1345"/>
    </location>
</feature>
<feature type="chain" id="PRO_0000268000" description="Serine protease subunit NS2B" evidence="6">
    <location>
        <begin position="1346"/>
        <end position="1475"/>
    </location>
</feature>
<feature type="chain" id="PRO_0000268001" description="Serine protease NS3" evidence="6">
    <location>
        <begin position="1476"/>
        <end position="2093"/>
    </location>
</feature>
<feature type="chain" id="PRO_0000268002" description="Non-structural protein 4A" evidence="6">
    <location>
        <begin position="2094"/>
        <end position="2220"/>
    </location>
</feature>
<feature type="peptide" id="PRO_0000268003" description="Peptide 2k" evidence="6">
    <location>
        <begin position="2221"/>
        <end position="2243"/>
    </location>
</feature>
<feature type="chain" id="PRO_0000268004" description="Non-structural protein 4B" evidence="6">
    <location>
        <begin position="2244"/>
        <end position="2491"/>
    </location>
</feature>
<feature type="chain" id="PRO_0000268005" description="RNA-directed RNA polymerase NS5" evidence="6">
    <location>
        <begin position="2492"/>
        <end position="3391"/>
    </location>
</feature>
<feature type="topological domain" description="Cytoplasmic" evidence="11">
    <location>
        <begin position="1"/>
        <end position="101"/>
    </location>
</feature>
<feature type="transmembrane region" description="Helical" evidence="11">
    <location>
        <begin position="102"/>
        <end position="122"/>
    </location>
</feature>
<feature type="topological domain" description="Extracellular" evidence="11">
    <location>
        <begin position="123"/>
        <end position="238"/>
    </location>
</feature>
<feature type="transmembrane region" description="Helical" evidence="18">
    <location>
        <begin position="239"/>
        <end position="259"/>
    </location>
</feature>
<feature type="topological domain" description="Cytoplasmic" evidence="18">
    <location>
        <begin position="260"/>
        <end position="265"/>
    </location>
</feature>
<feature type="transmembrane region" description="Helical" evidence="18">
    <location>
        <begin position="266"/>
        <end position="280"/>
    </location>
</feature>
<feature type="topological domain" description="Extracellular" evidence="18">
    <location>
        <begin position="281"/>
        <end position="725"/>
    </location>
</feature>
<feature type="transmembrane region" description="Helical" evidence="18">
    <location>
        <begin position="726"/>
        <end position="746"/>
    </location>
</feature>
<feature type="topological domain" description="Cytoplasmic" evidence="18">
    <location>
        <begin position="747"/>
        <end position="752"/>
    </location>
</feature>
<feature type="transmembrane region" description="Helical" evidence="18">
    <location>
        <begin position="753"/>
        <end position="773"/>
    </location>
</feature>
<feature type="topological domain" description="Extracellular" evidence="11">
    <location>
        <begin position="774"/>
        <end position="1195"/>
    </location>
</feature>
<feature type="transmembrane region" description="Helical" evidence="11">
    <location>
        <begin position="1196"/>
        <end position="1220"/>
    </location>
</feature>
<feature type="topological domain" description="Cytoplasmic" evidence="11">
    <location>
        <begin position="1221"/>
        <end position="1226"/>
    </location>
</feature>
<feature type="transmembrane region" description="Helical" evidence="11">
    <location>
        <begin position="1227"/>
        <end position="1245"/>
    </location>
</feature>
<feature type="topological domain" description="Lumenal" evidence="11">
    <location>
        <begin position="1246"/>
        <end position="1269"/>
    </location>
</feature>
<feature type="transmembrane region" description="Helical" evidence="11">
    <location>
        <begin position="1270"/>
        <end position="1290"/>
    </location>
</feature>
<feature type="topological domain" description="Cytoplasmic" evidence="11">
    <location>
        <position position="1291"/>
    </location>
</feature>
<feature type="transmembrane region" description="Helical" evidence="11">
    <location>
        <begin position="1292"/>
        <end position="1310"/>
    </location>
</feature>
<feature type="topological domain" description="Lumenal" evidence="11">
    <location>
        <begin position="1311"/>
        <end position="1317"/>
    </location>
</feature>
<feature type="transmembrane region" description="Helical" evidence="11">
    <location>
        <begin position="1318"/>
        <end position="1338"/>
    </location>
</feature>
<feature type="topological domain" description="Cytoplasmic" evidence="11">
    <location>
        <begin position="1339"/>
        <end position="1346"/>
    </location>
</feature>
<feature type="transmembrane region" description="Helical" evidence="11">
    <location>
        <begin position="1347"/>
        <end position="1367"/>
    </location>
</feature>
<feature type="topological domain" description="Lumenal" evidence="11">
    <location>
        <begin position="1368"/>
        <end position="1370"/>
    </location>
</feature>
<feature type="transmembrane region" description="Helical" evidence="11">
    <location>
        <begin position="1371"/>
        <end position="1391"/>
    </location>
</feature>
<feature type="topological domain" description="Cytoplasmic" evidence="11">
    <location>
        <begin position="1392"/>
        <end position="1447"/>
    </location>
</feature>
<feature type="intramembrane region" description="Helical" evidence="11">
    <location>
        <begin position="1448"/>
        <end position="1468"/>
    </location>
</feature>
<feature type="topological domain" description="Cytoplasmic" evidence="11">
    <location>
        <begin position="1469"/>
        <end position="2147"/>
    </location>
</feature>
<feature type="transmembrane region" description="Helical" evidence="11">
    <location>
        <begin position="2148"/>
        <end position="2168"/>
    </location>
</feature>
<feature type="topological domain" description="Lumenal" evidence="11">
    <location>
        <begin position="2169"/>
        <end position="2170"/>
    </location>
</feature>
<feature type="intramembrane region" description="Helical" evidence="11">
    <location>
        <begin position="2171"/>
        <end position="2191"/>
    </location>
</feature>
<feature type="topological domain" description="Lumenal" evidence="11">
    <location>
        <position position="2192"/>
    </location>
</feature>
<feature type="transmembrane region" description="Helical" evidence="11">
    <location>
        <begin position="2193"/>
        <end position="2213"/>
    </location>
</feature>
<feature type="topological domain" description="Cytoplasmic" evidence="11">
    <location>
        <begin position="2214"/>
        <end position="2228"/>
    </location>
</feature>
<feature type="transmembrane region" description="Helical; Note=Signal for NS4B" evidence="11">
    <location>
        <begin position="2229"/>
        <end position="2249"/>
    </location>
</feature>
<feature type="topological domain" description="Lumenal" evidence="11">
    <location>
        <begin position="2250"/>
        <end position="2274"/>
    </location>
</feature>
<feature type="intramembrane region" description="Helical" evidence="11">
    <location>
        <begin position="2275"/>
        <end position="2295"/>
    </location>
</feature>
<feature type="topological domain" description="Lumenal" evidence="11">
    <location>
        <begin position="2296"/>
        <end position="2316"/>
    </location>
</feature>
<feature type="intramembrane region" description="Helical" evidence="11">
    <location>
        <begin position="2317"/>
        <end position="2337"/>
    </location>
</feature>
<feature type="topological domain" description="Lumenal" evidence="11">
    <location>
        <begin position="2338"/>
        <end position="2347"/>
    </location>
</feature>
<feature type="transmembrane region" description="Helical" evidence="11">
    <location>
        <begin position="2348"/>
        <end position="2368"/>
    </location>
</feature>
<feature type="topological domain" description="Cytoplasmic" evidence="11">
    <location>
        <begin position="2369"/>
        <end position="2413"/>
    </location>
</feature>
<feature type="transmembrane region" description="Helical" evidence="11">
    <location>
        <begin position="2414"/>
        <end position="2434"/>
    </location>
</feature>
<feature type="topological domain" description="Lumenal" evidence="11">
    <location>
        <begin position="2435"/>
        <end position="2459"/>
    </location>
</feature>
<feature type="transmembrane region" description="Helical" evidence="11">
    <location>
        <begin position="2460"/>
        <end position="2480"/>
    </location>
</feature>
<feature type="topological domain" description="Cytoplasmic" evidence="11">
    <location>
        <begin position="2481"/>
        <end position="3391"/>
    </location>
</feature>
<feature type="domain" description="Peptidase S7" evidence="16">
    <location>
        <begin position="1476"/>
        <end position="1653"/>
    </location>
</feature>
<feature type="domain" description="Helicase ATP-binding" evidence="14">
    <location>
        <begin position="1655"/>
        <end position="1811"/>
    </location>
</feature>
<feature type="domain" description="Helicase C-terminal">
    <location>
        <begin position="1821"/>
        <end position="1988"/>
    </location>
</feature>
<feature type="domain" description="mRNA cap 0-1 NS5-type MT" evidence="17">
    <location>
        <begin position="2493"/>
        <end position="2755"/>
    </location>
</feature>
<feature type="domain" description="RdRp catalytic" evidence="13">
    <location>
        <begin position="3020"/>
        <end position="3169"/>
    </location>
</feature>
<feature type="region of interest" description="Interaction with host EXOC1" evidence="5">
    <location>
        <begin position="1"/>
        <end position="15"/>
    </location>
</feature>
<feature type="region of interest" description="Hydrophobic; homodimerization of capsid protein C" evidence="6">
    <location>
        <begin position="37"/>
        <end position="72"/>
    </location>
</feature>
<feature type="region of interest" description="Fusion peptide" evidence="3">
    <location>
        <begin position="378"/>
        <end position="391"/>
    </location>
</feature>
<feature type="region of interest" description="Interacts with and activates NS3 protease" evidence="15">
    <location>
        <begin position="1398"/>
        <end position="1437"/>
    </location>
</feature>
<feature type="region of interest" description="Important for RNA-binding" evidence="4">
    <location>
        <begin position="1659"/>
        <end position="1662"/>
    </location>
</feature>
<feature type="short sequence motif" description="DEAH box" evidence="14">
    <location>
        <begin position="1759"/>
        <end position="1762"/>
    </location>
</feature>
<feature type="short sequence motif" description="SUMO-interacting motif" evidence="6">
    <location>
        <begin position="2568"/>
        <end position="2571"/>
    </location>
</feature>
<feature type="active site" description="Charge relay system; for serine protease NS3 activity" evidence="16">
    <location>
        <position position="1526"/>
    </location>
</feature>
<feature type="active site" description="Charge relay system; for serine protease NS3 activity" evidence="16">
    <location>
        <position position="1550"/>
    </location>
</feature>
<feature type="active site" description="Charge relay system; for serine protease NS3 activity" evidence="16">
    <location>
        <position position="1610"/>
    </location>
</feature>
<feature type="active site" description="For 2'-O-MTase activity" evidence="9">
    <location>
        <position position="2552"/>
    </location>
</feature>
<feature type="active site" description="For 2'-O-MTase activity" evidence="9">
    <location>
        <position position="2637"/>
    </location>
</feature>
<feature type="active site" description="For 2'-O-MTase activity" evidence="9">
    <location>
        <position position="2672"/>
    </location>
</feature>
<feature type="active site" description="For 2'-O-MTase activity" evidence="9">
    <location>
        <position position="2708"/>
    </location>
</feature>
<feature type="binding site" evidence="14">
    <location>
        <begin position="1668"/>
        <end position="1675"/>
    </location>
    <ligand>
        <name>ATP</name>
        <dbReference type="ChEBI" id="CHEBI:30616"/>
    </ligand>
</feature>
<feature type="binding site" evidence="17">
    <location>
        <position position="2547"/>
    </location>
    <ligand>
        <name>S-adenosyl-L-methionine</name>
        <dbReference type="ChEBI" id="CHEBI:59789"/>
    </ligand>
</feature>
<feature type="binding site" evidence="17">
    <location>
        <position position="2577"/>
    </location>
    <ligand>
        <name>S-adenosyl-L-methionine</name>
        <dbReference type="ChEBI" id="CHEBI:59789"/>
    </ligand>
</feature>
<feature type="binding site" evidence="17">
    <location>
        <position position="2578"/>
    </location>
    <ligand>
        <name>S-adenosyl-L-methionine</name>
        <dbReference type="ChEBI" id="CHEBI:59789"/>
    </ligand>
</feature>
<feature type="binding site" evidence="17">
    <location>
        <position position="2595"/>
    </location>
    <ligand>
        <name>S-adenosyl-L-methionine</name>
        <dbReference type="ChEBI" id="CHEBI:59789"/>
    </ligand>
</feature>
<feature type="binding site" evidence="17">
    <location>
        <position position="2596"/>
    </location>
    <ligand>
        <name>S-adenosyl-L-methionine</name>
        <dbReference type="ChEBI" id="CHEBI:59789"/>
    </ligand>
</feature>
<feature type="binding site" evidence="17">
    <location>
        <position position="2622"/>
    </location>
    <ligand>
        <name>S-adenosyl-L-methionine</name>
        <dbReference type="ChEBI" id="CHEBI:59789"/>
    </ligand>
</feature>
<feature type="binding site" evidence="17">
    <location>
        <position position="2623"/>
    </location>
    <ligand>
        <name>S-adenosyl-L-methionine</name>
        <dbReference type="ChEBI" id="CHEBI:59789"/>
    </ligand>
</feature>
<feature type="binding site" evidence="17">
    <location>
        <position position="2638"/>
    </location>
    <ligand>
        <name>S-adenosyl-L-methionine</name>
        <dbReference type="ChEBI" id="CHEBI:59789"/>
    </ligand>
</feature>
<feature type="binding site" evidence="17">
    <location>
        <position position="2710"/>
    </location>
    <ligand>
        <name>S-adenosyl-L-methionine</name>
        <dbReference type="ChEBI" id="CHEBI:59789"/>
    </ligand>
</feature>
<feature type="binding site" evidence="9">
    <location>
        <position position="2929"/>
    </location>
    <ligand>
        <name>Zn(2+)</name>
        <dbReference type="ChEBI" id="CHEBI:29105"/>
        <label>1</label>
    </ligand>
</feature>
<feature type="binding site" evidence="9">
    <location>
        <position position="2933"/>
    </location>
    <ligand>
        <name>Zn(2+)</name>
        <dbReference type="ChEBI" id="CHEBI:29105"/>
        <label>1</label>
    </ligand>
</feature>
<feature type="binding site" evidence="9">
    <location>
        <position position="2938"/>
    </location>
    <ligand>
        <name>Zn(2+)</name>
        <dbReference type="ChEBI" id="CHEBI:29105"/>
        <label>1</label>
    </ligand>
</feature>
<feature type="binding site" evidence="9">
    <location>
        <position position="2941"/>
    </location>
    <ligand>
        <name>Zn(2+)</name>
        <dbReference type="ChEBI" id="CHEBI:29105"/>
        <label>1</label>
    </ligand>
</feature>
<feature type="binding site" evidence="9">
    <location>
        <position position="3203"/>
    </location>
    <ligand>
        <name>Zn(2+)</name>
        <dbReference type="ChEBI" id="CHEBI:29105"/>
        <label>2</label>
    </ligand>
</feature>
<feature type="binding site" evidence="9">
    <location>
        <position position="3219"/>
    </location>
    <ligand>
        <name>Zn(2+)</name>
        <dbReference type="ChEBI" id="CHEBI:29105"/>
        <label>2</label>
    </ligand>
</feature>
<feature type="binding site" evidence="9">
    <location>
        <position position="3338"/>
    </location>
    <ligand>
        <name>Zn(2+)</name>
        <dbReference type="ChEBI" id="CHEBI:29105"/>
        <label>2</label>
    </ligand>
</feature>
<feature type="site" description="Cleavage; by viral protease NS3" evidence="6">
    <location>
        <begin position="100"/>
        <end position="101"/>
    </location>
</feature>
<feature type="site" description="Cleavage; by host signal peptidase" evidence="6">
    <location>
        <begin position="114"/>
        <end position="115"/>
    </location>
</feature>
<feature type="site" description="Cleavage; by host furin" evidence="6 11">
    <location>
        <begin position="205"/>
        <end position="206"/>
    </location>
</feature>
<feature type="site" description="Cleavage; by host signal peptidase" evidence="6">
    <location>
        <begin position="280"/>
        <end position="281"/>
    </location>
</feature>
<feature type="site" description="Cleavage; by host signal peptidase" evidence="6">
    <location>
        <begin position="775"/>
        <end position="776"/>
    </location>
</feature>
<feature type="site" description="Cleavage; by host" evidence="6">
    <location>
        <begin position="1127"/>
        <end position="1128"/>
    </location>
</feature>
<feature type="site" description="Cleavage; by viral protease NS3" evidence="6">
    <location>
        <begin position="1345"/>
        <end position="1346"/>
    </location>
</feature>
<feature type="site" description="Cleavage; by autolysis" evidence="6">
    <location>
        <begin position="1475"/>
        <end position="1476"/>
    </location>
</feature>
<feature type="site" description="Involved in NS3 ATPase and RTPase activities" evidence="2">
    <location>
        <position position="1932"/>
    </location>
</feature>
<feature type="site" description="Involved in NS3 ATPase and RTPase activities" evidence="2">
    <location>
        <position position="1935"/>
    </location>
</feature>
<feature type="site" description="Cleavage; by autolysis" evidence="6">
    <location>
        <begin position="2093"/>
        <end position="2094"/>
    </location>
</feature>
<feature type="site" description="Cleavage; by viral protease NS3" evidence="6">
    <location>
        <begin position="2220"/>
        <end position="2221"/>
    </location>
</feature>
<feature type="site" description="Cleavage; by host signal peptidase" evidence="6">
    <location>
        <begin position="2243"/>
        <end position="2244"/>
    </location>
</feature>
<feature type="site" description="Cleavage; by viral protease NS3" evidence="6">
    <location>
        <begin position="2491"/>
        <end position="2492"/>
    </location>
</feature>
<feature type="site" description="mRNA cap binding" evidence="17">
    <location>
        <position position="2505"/>
    </location>
</feature>
<feature type="site" description="mRNA cap binding; via carbonyl oxygen" evidence="17">
    <location>
        <position position="2508"/>
    </location>
</feature>
<feature type="site" description="mRNA cap binding" evidence="17">
    <location>
        <position position="2509"/>
    </location>
</feature>
<feature type="site" description="mRNA cap binding; via carbonyl oxygen" evidence="17">
    <location>
        <position position="2511"/>
    </location>
</feature>
<feature type="site" description="mRNA cap binding" evidence="17">
    <location>
        <position position="2516"/>
    </location>
</feature>
<feature type="site" description="mRNA cap binding" evidence="17">
    <location>
        <position position="2520"/>
    </location>
</feature>
<feature type="site" description="Essential for 2'-O-methyltransferase activity" evidence="17">
    <location>
        <position position="2552"/>
    </location>
</feature>
<feature type="site" description="Essential for 2'-O-methyltransferase and N-7 methyltransferase activity" evidence="17">
    <location>
        <position position="2637"/>
    </location>
</feature>
<feature type="site" description="mRNA cap binding" evidence="17">
    <location>
        <position position="2641"/>
    </location>
</feature>
<feature type="site" description="Essential for 2'-O-methyltransferase activity" evidence="17">
    <location>
        <position position="2672"/>
    </location>
</feature>
<feature type="site" description="mRNA cap binding" evidence="17">
    <location>
        <position position="2703"/>
    </location>
</feature>
<feature type="site" description="mRNA cap binding" evidence="17">
    <location>
        <position position="2705"/>
    </location>
</feature>
<feature type="site" description="Essential for 2'-O-methyltransferase activity" evidence="17">
    <location>
        <position position="2708"/>
    </location>
</feature>
<feature type="modified residue" description="N6-acetyllysine; by host" evidence="8">
    <location>
        <position position="1863"/>
    </location>
</feature>
<feature type="modified residue" description="Phosphoserine" evidence="1">
    <location>
        <position position="2547"/>
    </location>
</feature>
<feature type="glycosylation site" description="N-linked (GlcNAc...) asparagine; by host" evidence="12">
    <location>
        <position position="183"/>
    </location>
</feature>
<feature type="glycosylation site" description="N-linked (GlcNAc...) asparagine; by host" evidence="12">
    <location>
        <position position="347"/>
    </location>
</feature>
<feature type="glycosylation site" description="N-linked (GlcNAc...) asparagine; by host" evidence="12">
    <location>
        <position position="433"/>
    </location>
</feature>
<feature type="glycosylation site" description="N-linked (GlcNAc...) asparagine; by host" evidence="12">
    <location>
        <position position="905"/>
    </location>
</feature>
<feature type="glycosylation site" description="N-linked (GlcNAc...) asparagine; by host" evidence="12">
    <location>
        <position position="982"/>
    </location>
</feature>
<feature type="glycosylation site" description="N-linked (GlcNAc...) asparagine; by host" evidence="12">
    <location>
        <position position="1134"/>
    </location>
</feature>
<feature type="glycosylation site" description="N-linked (GlcNAc...) asparagine; by host" evidence="12">
    <location>
        <position position="2301"/>
    </location>
</feature>
<feature type="glycosylation site" description="N-linked (GlcNAc...) asparagine; by host" evidence="12">
    <location>
        <position position="2305"/>
    </location>
</feature>
<feature type="glycosylation site" description="N-linked (GlcNAc...) asparagine; by host" evidence="12">
    <location>
        <position position="2457"/>
    </location>
</feature>
<feature type="disulfide bond" evidence="5">
    <location>
        <begin position="283"/>
        <end position="310"/>
    </location>
</feature>
<feature type="disulfide bond" evidence="5">
    <location>
        <begin position="340"/>
        <end position="401"/>
    </location>
</feature>
<feature type="disulfide bond" evidence="5">
    <location>
        <begin position="354"/>
        <end position="385"/>
    </location>
</feature>
<feature type="disulfide bond" evidence="5">
    <location>
        <begin position="372"/>
        <end position="396"/>
    </location>
</feature>
<feature type="disulfide bond" evidence="5">
    <location>
        <begin position="465"/>
        <end position="565"/>
    </location>
</feature>
<feature type="disulfide bond" evidence="5">
    <location>
        <begin position="582"/>
        <end position="613"/>
    </location>
</feature>
<feature type="disulfide bond" evidence="5">
    <location>
        <begin position="779"/>
        <end position="790"/>
    </location>
</feature>
<feature type="disulfide bond" evidence="5">
    <location>
        <begin position="830"/>
        <end position="918"/>
    </location>
</feature>
<feature type="disulfide bond" evidence="5">
    <location>
        <begin position="954"/>
        <end position="998"/>
    </location>
</feature>
<feature type="disulfide bond" evidence="5">
    <location>
        <begin position="1055"/>
        <end position="1104"/>
    </location>
</feature>
<feature type="disulfide bond" evidence="5">
    <location>
        <begin position="1066"/>
        <end position="1088"/>
    </location>
</feature>
<feature type="disulfide bond" evidence="5">
    <location>
        <begin position="1087"/>
        <end position="1091"/>
    </location>
</feature>
<feature type="sequence variant" description="In strain: Isolate Malaysia M1.">
    <original>F</original>
    <variation>L</variation>
    <location>
        <position position="291"/>
    </location>
</feature>
<feature type="sequence variant" description="In strain: Isolate Malaysia M1.">
    <original>Q</original>
    <variation>L</variation>
    <location>
        <position position="357"/>
    </location>
</feature>
<feature type="sequence variant" description="In strain: Isolate Malaysia M1.">
    <original>F</original>
    <variation>L</variation>
    <location>
        <position position="370"/>
    </location>
</feature>
<feature type="sequence variant" description="In strain: Isolate Malaysia M1.">
    <original>V</original>
    <variation>I</variation>
    <location>
        <position position="444"/>
    </location>
</feature>
<feature type="sequence variant" description="In strain: Isolate Malaysia M1.">
    <original>M</original>
    <variation>I</variation>
    <location>
        <position position="540"/>
    </location>
</feature>
<feature type="sequence variant" description="In strain: Isolate Malaysia M1.">
    <original>K</original>
    <variation>E</variation>
    <location>
        <position position="590"/>
    </location>
</feature>
<feature type="sequence variant" description="In strain: Isolate Malaysia M1.">
    <original>I</original>
    <variation>V</variation>
    <location>
        <position position="647"/>
    </location>
</feature>
<feature type="sequence variant" description="In strain: Isolate Malaysia M1.">
    <original>R</original>
    <variation>I</variation>
    <location>
        <position position="687"/>
    </location>
</feature>
<feature type="sequence variant" description="In strain: Isolate Malaysia M1.">
    <original>G</original>
    <variation>R</variation>
    <location>
        <position position="696"/>
    </location>
</feature>
<feature type="sequence variant" description="In strain: Isolate Malaysia M1.">
    <original>V</original>
    <variation>C</variation>
    <location>
        <position position="773"/>
    </location>
</feature>
<feature type="strand" evidence="19">
    <location>
        <begin position="1396"/>
        <end position="1402"/>
    </location>
</feature>
<feature type="strand" evidence="19">
    <location>
        <begin position="1411"/>
        <end position="1414"/>
    </location>
</feature>
<feature type="strand" evidence="20">
    <location>
        <begin position="1418"/>
        <end position="1420"/>
    </location>
</feature>
<feature type="strand" evidence="19">
    <location>
        <begin position="1422"/>
        <end position="1424"/>
    </location>
</feature>
<feature type="turn" evidence="19">
    <location>
        <begin position="1425"/>
        <end position="1427"/>
    </location>
</feature>
<feature type="strand" evidence="19">
    <location>
        <begin position="1428"/>
        <end position="1433"/>
    </location>
</feature>
<feature type="strand" evidence="19">
    <location>
        <begin position="1453"/>
        <end position="1455"/>
    </location>
</feature>
<feature type="strand" evidence="19">
    <location>
        <begin position="1483"/>
        <end position="1485"/>
    </location>
</feature>
<feature type="strand" evidence="20">
    <location>
        <begin position="1486"/>
        <end position="1488"/>
    </location>
</feature>
<feature type="strand" evidence="19">
    <location>
        <begin position="1496"/>
        <end position="1504"/>
    </location>
</feature>
<feature type="strand" evidence="19">
    <location>
        <begin position="1507"/>
        <end position="1517"/>
    </location>
</feature>
<feature type="strand" evidence="19">
    <location>
        <begin position="1520"/>
        <end position="1525"/>
    </location>
</feature>
<feature type="turn" evidence="19">
    <location>
        <begin position="1526"/>
        <end position="1529"/>
    </location>
</feature>
<feature type="strand" evidence="19">
    <location>
        <begin position="1533"/>
        <end position="1535"/>
    </location>
</feature>
<feature type="strand" evidence="19">
    <location>
        <begin position="1538"/>
        <end position="1540"/>
    </location>
</feature>
<feature type="strand" evidence="19">
    <location>
        <begin position="1543"/>
        <end position="1546"/>
    </location>
</feature>
<feature type="turn" evidence="19">
    <location>
        <begin position="1547"/>
        <end position="1550"/>
    </location>
</feature>
<feature type="strand" evidence="19">
    <location>
        <begin position="1551"/>
        <end position="1558"/>
    </location>
</feature>
<feature type="strand" evidence="19">
    <location>
        <begin position="1570"/>
        <end position="1575"/>
    </location>
</feature>
<feature type="strand" evidence="19">
    <location>
        <begin position="1581"/>
        <end position="1587"/>
    </location>
</feature>
<feature type="strand" evidence="19">
    <location>
        <begin position="1589"/>
        <end position="1592"/>
    </location>
</feature>
<feature type="strand" evidence="19">
    <location>
        <begin position="1597"/>
        <end position="1602"/>
    </location>
</feature>
<feature type="strand" evidence="19">
    <location>
        <begin position="1612"/>
        <end position="1616"/>
    </location>
</feature>
<feature type="strand" evidence="19">
    <location>
        <begin position="1623"/>
        <end position="1631"/>
    </location>
</feature>
<feature type="turn" evidence="19">
    <location>
        <begin position="1632"/>
        <end position="1634"/>
    </location>
</feature>
<feature type="strand" evidence="19">
    <location>
        <begin position="1635"/>
        <end position="1641"/>
    </location>
</feature>
<feature type="strand" evidence="19">
    <location>
        <begin position="1647"/>
        <end position="1650"/>
    </location>
</feature>
<organism>
    <name type="scientific">Dengue virus type 2 (isolate Thailand/0168/1979)</name>
    <name type="common">DENV-2</name>
    <dbReference type="NCBI Taxonomy" id="413041"/>
    <lineage>
        <taxon>Viruses</taxon>
        <taxon>Riboviria</taxon>
        <taxon>Orthornavirae</taxon>
        <taxon>Kitrinoviricota</taxon>
        <taxon>Flasuviricetes</taxon>
        <taxon>Amarillovirales</taxon>
        <taxon>Flaviviridae</taxon>
        <taxon>Orthoflavivirus</taxon>
        <taxon>Orthoflavivirus denguei</taxon>
        <taxon>Dengue virus</taxon>
    </lineage>
</organism>
<keyword id="KW-0002">3D-structure</keyword>
<keyword id="KW-0007">Acetylation</keyword>
<keyword id="KW-1072">Activation of host autophagy by virus</keyword>
<keyword id="KW-0067">ATP-binding</keyword>
<keyword id="KW-0167">Capsid protein</keyword>
<keyword id="KW-1165">Clathrin-mediated endocytosis of virus by host</keyword>
<keyword id="KW-0165">Cleavage on pair of basic residues</keyword>
<keyword id="KW-1015">Disulfide bond</keyword>
<keyword id="KW-1170">Fusion of virus membrane with host endosomal membrane</keyword>
<keyword id="KW-1168">Fusion of virus membrane with host membrane</keyword>
<keyword id="KW-0325">Glycoprotein</keyword>
<keyword id="KW-0347">Helicase</keyword>
<keyword id="KW-1035">Host cytoplasm</keyword>
<keyword id="KW-1038">Host endoplasmic reticulum</keyword>
<keyword id="KW-1043">Host membrane</keyword>
<keyword id="KW-1045">Host mitochondrion</keyword>
<keyword id="KW-1048">Host nucleus</keyword>
<keyword id="KW-0945">Host-virus interaction</keyword>
<keyword id="KW-0378">Hydrolase</keyword>
<keyword id="KW-1090">Inhibition of host innate immune response by virus</keyword>
<keyword id="KW-1114">Inhibition of host interferon signaling pathway by virus</keyword>
<keyword id="KW-1097">Inhibition of host MAVS by virus</keyword>
<keyword id="KW-1113">Inhibition of host RLR pathway by virus</keyword>
<keyword id="KW-1106">Inhibition of host STAT2 by virus</keyword>
<keyword id="KW-1112">Inhibition of host TYK2 by virus</keyword>
<keyword id="KW-0922">Interferon antiviral system evasion</keyword>
<keyword id="KW-0407">Ion channel</keyword>
<keyword id="KW-0406">Ion transport</keyword>
<keyword id="KW-0472">Membrane</keyword>
<keyword id="KW-0479">Metal-binding</keyword>
<keyword id="KW-0489">Methyltransferase</keyword>
<keyword id="KW-0506">mRNA capping</keyword>
<keyword id="KW-0507">mRNA processing</keyword>
<keyword id="KW-0511">Multifunctional enzyme</keyword>
<keyword id="KW-0547">Nucleotide-binding</keyword>
<keyword id="KW-0548">Nucleotidyltransferase</keyword>
<keyword id="KW-0597">Phosphoprotein</keyword>
<keyword id="KW-0645">Protease</keyword>
<keyword id="KW-0694">RNA-binding</keyword>
<keyword id="KW-0696">RNA-directed RNA polymerase</keyword>
<keyword id="KW-0949">S-adenosyl-L-methionine</keyword>
<keyword id="KW-0964">Secreted</keyword>
<keyword id="KW-0720">Serine protease</keyword>
<keyword id="KW-0941">Suppressor of RNA silencing</keyword>
<keyword id="KW-0804">Transcription</keyword>
<keyword id="KW-0805">Transcription regulation</keyword>
<keyword id="KW-0808">Transferase</keyword>
<keyword id="KW-0812">Transmembrane</keyword>
<keyword id="KW-1133">Transmembrane helix</keyword>
<keyword id="KW-0813">Transport</keyword>
<keyword id="KW-0832">Ubl conjugation</keyword>
<keyword id="KW-1161">Viral attachment to host cell</keyword>
<keyword id="KW-0261">Viral envelope protein</keyword>
<keyword id="KW-0899">Viral immunoevasion</keyword>
<keyword id="KW-1182">Viral ion channel</keyword>
<keyword id="KW-1162">Viral penetration into host cytoplasm</keyword>
<keyword id="KW-0693">Viral RNA replication</keyword>
<keyword id="KW-0946">Virion</keyword>
<keyword id="KW-1164">Virus endocytosis by host</keyword>
<keyword id="KW-1160">Virus entry into host cell</keyword>
<keyword id="KW-0862">Zinc</keyword>
<protein>
    <recommendedName>
        <fullName>Genome polyprotein</fullName>
    </recommendedName>
    <component>
        <recommendedName>
            <fullName>Capsid protein C</fullName>
        </recommendedName>
        <alternativeName>
            <fullName>Core protein</fullName>
        </alternativeName>
    </component>
    <component>
        <recommendedName>
            <fullName>Protein prM</fullName>
        </recommendedName>
    </component>
    <component>
        <recommendedName>
            <fullName>Peptide pr</fullName>
        </recommendedName>
    </component>
    <component>
        <recommendedName>
            <fullName>Small envelope protein M</fullName>
        </recommendedName>
        <alternativeName>
            <fullName>Matrix protein</fullName>
        </alternativeName>
    </component>
    <component>
        <recommendedName>
            <fullName>Envelope protein E</fullName>
        </recommendedName>
    </component>
    <component>
        <recommendedName>
            <fullName>Non-structural protein 1</fullName>
            <shortName>NS1</shortName>
        </recommendedName>
    </component>
    <component>
        <recommendedName>
            <fullName>Non-structural protein 2A</fullName>
            <shortName>NS2A</shortName>
        </recommendedName>
    </component>
    <component>
        <recommendedName>
            <fullName>Serine protease subunit NS2B</fullName>
        </recommendedName>
        <alternativeName>
            <fullName>Flavivirin protease NS2B regulatory subunit</fullName>
        </alternativeName>
        <alternativeName>
            <fullName>Non-structural protein 2B</fullName>
        </alternativeName>
    </component>
    <component>
        <recommendedName>
            <fullName>Serine protease NS3</fullName>
            <ecNumber>3.4.21.91</ecNumber>
            <ecNumber evidence="10">3.6.1.15</ecNumber>
            <ecNumber evidence="10">3.6.4.13</ecNumber>
        </recommendedName>
        <alternativeName>
            <fullName>Flavivirin protease NS3 catalytic subunit</fullName>
        </alternativeName>
        <alternativeName>
            <fullName>Non-structural protein 3</fullName>
        </alternativeName>
    </component>
    <component>
        <recommendedName>
            <fullName>Non-structural protein 4A</fullName>
            <shortName>NS4A</shortName>
        </recommendedName>
    </component>
    <component>
        <recommendedName>
            <fullName>Peptide 2k</fullName>
        </recommendedName>
    </component>
    <component>
        <recommendedName>
            <fullName>Non-structural protein 4B</fullName>
            <shortName>NS4B</shortName>
        </recommendedName>
    </component>
    <component>
        <recommendedName>
            <fullName>RNA-directed RNA polymerase NS5</fullName>
            <ecNumber evidence="17">2.1.1.56</ecNumber>
            <ecNumber evidence="17">2.1.1.57</ecNumber>
            <ecNumber evidence="13">2.7.7.48</ecNumber>
        </recommendedName>
        <alternativeName>
            <fullName>Non-structural protein 5</fullName>
        </alternativeName>
    </component>
</protein>
<proteinExistence type="evidence at protein level"/>